<comment type="function">
    <text evidence="4">Plays a role in hematopoiesis and immune system development, and participates in the inflammatory response.</text>
</comment>
<comment type="tissue specificity">
    <text evidence="4">Highly expressed in hematopoietic and immune systems including in the thymus, spleen, kidney, and blood vessel.</text>
</comment>
<comment type="disruption phenotype">
    <text evidence="4">Increased mortality and impaired thymus development (PubMed:37838209). No effect on blood vessel development but hbbe1 expression in 48 hpf embryos is lower than in wild-type embryos with recovery by 60 hpf, suggesting impaired early erythrocytic development (PubMed:37838209). Significantly increased numbers of neutrophils and macrophages in an inflammatory injury model (PubMed:37838209).</text>
</comment>
<comment type="similarity">
    <text evidence="5">Belongs to the FAM76 family.</text>
</comment>
<evidence type="ECO:0000255" key="1"/>
<evidence type="ECO:0000256" key="2">
    <source>
        <dbReference type="SAM" id="MobiDB-lite"/>
    </source>
</evidence>
<evidence type="ECO:0000269" key="3">
    <source>
    </source>
</evidence>
<evidence type="ECO:0000269" key="4">
    <source>
    </source>
</evidence>
<evidence type="ECO:0000305" key="5"/>
<sequence length="328" mass="37691">MATSALYACTKCNQRFPFEELSQGQQLCKECRIAHPIVKCTYCRSEFQQESKTNTICKKCAQNVKQFGTPKPCQYCNIIAAFIGTKCQRCTNSEKKYGPPQTCEQCKQQCAFDRKDEGRRKVDGKLLCWLCTLSYRRVLQKTKEQRKGLGSSHSNSSSLSEKEHQRHHHHHQHHRHGSSHHKISGNLSPEQDQGLWKQSIQKETPKKKPKLETKPSNGDSSSITQSMDSGGTDNFILISQLKEEVMSLKRMLQQRDQTILEKDRKLTELKADFQYQESNMRVKMNNMEKAHKEAMEQQQAKNRELLKQVAALSKGKKFDRSGSSLLLP</sequence>
<reference key="1">
    <citation type="submission" date="2003-10" db="EMBL/GenBank/DDBJ databases">
        <authorList>
            <consortium name="NIH - Zebrafish Gene Collection (ZGC) project"/>
        </authorList>
    </citation>
    <scope>NUCLEOTIDE SEQUENCE [LARGE SCALE MRNA]</scope>
    <source>
        <tissue>Eye</tissue>
    </source>
</reference>
<reference key="2">
    <citation type="journal article" date="2008" name="J. Proteome Res.">
        <title>Online automated in vivo zebrafish phosphoproteomics: from large-scale analysis down to a single embryo.</title>
        <authorList>
            <person name="Lemeer S."/>
            <person name="Pinkse M.W.H."/>
            <person name="Mohammed S."/>
            <person name="van Breukelen B."/>
            <person name="den Hertog J."/>
            <person name="Slijper M."/>
            <person name="Heck A.J.R."/>
        </authorList>
    </citation>
    <scope>PHOSPHORYLATION [LARGE SCALE ANALYSIS] AT SER-188</scope>
    <scope>IDENTIFICATION BY MASS SPECTROMETRY</scope>
    <source>
        <tissue>Embryo</tissue>
    </source>
</reference>
<reference key="3">
    <citation type="journal article" date="2023" name="Fish Shellfish Immunol.">
        <title>Expression and functional analysis of fam76b in zebrafish.</title>
        <authorList>
            <person name="Zhu J."/>
            <person name="Yang J."/>
            <person name="Wen H."/>
            <person name="Wang M."/>
            <person name="Zheng X."/>
            <person name="Zhao J."/>
            <person name="Sun X."/>
            <person name="Yang P."/>
            <person name="Mao Q."/>
            <person name="Li Y."/>
            <person name="Xia H."/>
        </authorList>
    </citation>
    <scope>FUNCTION</scope>
    <scope>TISSUE SPECIFICITY</scope>
    <scope>DISRUPTION PHENOTYPE</scope>
</reference>
<name>FA76B_DANRE</name>
<accession>Q6PBM7</accession>
<protein>
    <recommendedName>
        <fullName>Protein FAM76B</fullName>
    </recommendedName>
</protein>
<feature type="chain" id="PRO_0000245765" description="Protein FAM76B">
    <location>
        <begin position="1"/>
        <end position="328"/>
    </location>
</feature>
<feature type="region of interest" description="Disordered" evidence="2">
    <location>
        <begin position="143"/>
        <end position="232"/>
    </location>
</feature>
<feature type="coiled-coil region" evidence="1">
    <location>
        <begin position="237"/>
        <end position="316"/>
    </location>
</feature>
<feature type="compositionally biased region" description="Low complexity" evidence="2">
    <location>
        <begin position="148"/>
        <end position="159"/>
    </location>
</feature>
<feature type="compositionally biased region" description="Basic residues" evidence="2">
    <location>
        <begin position="165"/>
        <end position="183"/>
    </location>
</feature>
<feature type="compositionally biased region" description="Polar residues" evidence="2">
    <location>
        <begin position="185"/>
        <end position="201"/>
    </location>
</feature>
<feature type="compositionally biased region" description="Basic and acidic residues" evidence="2">
    <location>
        <begin position="203"/>
        <end position="213"/>
    </location>
</feature>
<feature type="compositionally biased region" description="Polar residues" evidence="2">
    <location>
        <begin position="216"/>
        <end position="232"/>
    </location>
</feature>
<feature type="modified residue" description="Phosphoserine" evidence="3">
    <location>
        <position position="188"/>
    </location>
</feature>
<organism>
    <name type="scientific">Danio rerio</name>
    <name type="common">Zebrafish</name>
    <name type="synonym">Brachydanio rerio</name>
    <dbReference type="NCBI Taxonomy" id="7955"/>
    <lineage>
        <taxon>Eukaryota</taxon>
        <taxon>Metazoa</taxon>
        <taxon>Chordata</taxon>
        <taxon>Craniata</taxon>
        <taxon>Vertebrata</taxon>
        <taxon>Euteleostomi</taxon>
        <taxon>Actinopterygii</taxon>
        <taxon>Neopterygii</taxon>
        <taxon>Teleostei</taxon>
        <taxon>Ostariophysi</taxon>
        <taxon>Cypriniformes</taxon>
        <taxon>Danionidae</taxon>
        <taxon>Danioninae</taxon>
        <taxon>Danio</taxon>
    </lineage>
</organism>
<dbReference type="EMBL" id="BC059652">
    <property type="protein sequence ID" value="AAH59652.1"/>
    <property type="molecule type" value="mRNA"/>
</dbReference>
<dbReference type="RefSeq" id="NP_956226.1">
    <property type="nucleotide sequence ID" value="NM_199932.1"/>
</dbReference>
<dbReference type="SMR" id="Q6PBM7"/>
<dbReference type="BioGRID" id="85516">
    <property type="interactions" value="1"/>
</dbReference>
<dbReference type="FunCoup" id="Q6PBM7">
    <property type="interactions" value="2539"/>
</dbReference>
<dbReference type="STRING" id="7955.ENSDARP00000026447"/>
<dbReference type="iPTMnet" id="Q6PBM7"/>
<dbReference type="PaxDb" id="7955-ENSDARP00000026447"/>
<dbReference type="Ensembl" id="ENSDART00000024815">
    <property type="protein sequence ID" value="ENSDARP00000026447"/>
    <property type="gene ID" value="ENSDARG00000012432"/>
</dbReference>
<dbReference type="GeneID" id="335015"/>
<dbReference type="KEGG" id="dre:335015"/>
<dbReference type="AGR" id="ZFIN:ZDB-GENE-030131-6955"/>
<dbReference type="CTD" id="143684"/>
<dbReference type="ZFIN" id="ZDB-GENE-030131-6955">
    <property type="gene designation" value="fam76b"/>
</dbReference>
<dbReference type="eggNOG" id="KOG3990">
    <property type="taxonomic scope" value="Eukaryota"/>
</dbReference>
<dbReference type="HOGENOM" id="CLU_029220_1_0_1"/>
<dbReference type="InParanoid" id="Q6PBM7"/>
<dbReference type="OMA" id="CACAYKR"/>
<dbReference type="OrthoDB" id="3689at2759"/>
<dbReference type="PhylomeDB" id="Q6PBM7"/>
<dbReference type="TreeFam" id="TF313644"/>
<dbReference type="PRO" id="PR:Q6PBM7"/>
<dbReference type="Proteomes" id="UP000000437">
    <property type="component" value="Chromosome 5"/>
</dbReference>
<dbReference type="Bgee" id="ENSDARG00000012432">
    <property type="expression patterns" value="Expressed in mature ovarian follicle and 26 other cell types or tissues"/>
</dbReference>
<dbReference type="GO" id="GO:0016607">
    <property type="term" value="C:nuclear speck"/>
    <property type="evidence" value="ECO:0000250"/>
    <property type="project" value="UniProtKB"/>
</dbReference>
<dbReference type="InterPro" id="IPR032017">
    <property type="entry name" value="FAM76"/>
</dbReference>
<dbReference type="PANTHER" id="PTHR46176">
    <property type="entry name" value="LD21662P"/>
    <property type="match status" value="1"/>
</dbReference>
<dbReference type="PANTHER" id="PTHR46176:SF3">
    <property type="entry name" value="PROTEIN FAM76B"/>
    <property type="match status" value="1"/>
</dbReference>
<dbReference type="Pfam" id="PF16046">
    <property type="entry name" value="FAM76"/>
    <property type="match status" value="1"/>
</dbReference>
<proteinExistence type="evidence at protein level"/>
<keyword id="KW-0175">Coiled coil</keyword>
<keyword id="KW-0597">Phosphoprotein</keyword>
<keyword id="KW-1185">Reference proteome</keyword>
<gene>
    <name type="primary">fam76b</name>
    <name type="ORF">zgc:73333</name>
</gene>